<reference key="1">
    <citation type="journal article" date="2004" name="Mamm. Genome">
        <title>Bovine beta-defensins: identification and characterization of novel bovine beta-defensin genes and their expression in mammary gland tissue.</title>
        <authorList>
            <person name="Roosen S."/>
            <person name="Exner K."/>
            <person name="Paul S."/>
            <person name="Schroder J.M."/>
            <person name="Kalm E."/>
            <person name="Looft C."/>
        </authorList>
    </citation>
    <scope>NUCLEOTIDE SEQUENCE [GENOMIC DNA]</scope>
</reference>
<reference key="2">
    <citation type="journal article" date="1993" name="J. Biol. Chem.">
        <title>Purification, primary structures, and antibacterial activities of beta-defensins, a new family of antimicrobial peptides from bovine neutrophils.</title>
        <authorList>
            <person name="Selsted M.E."/>
            <person name="Tang Y.-Q."/>
            <person name="Morris W.L."/>
            <person name="McGuire P.A."/>
            <person name="Novotny M.J."/>
            <person name="Smith W."/>
            <person name="Henschen A.H."/>
            <person name="Cullor J.S."/>
        </authorList>
    </citation>
    <scope>PROTEIN SEQUENCE OF 23-62</scope>
    <scope>PYROGLUTAMATE FORMATION AT GLN-23</scope>
    <source>
        <strain>Hereford</strain>
        <tissue>Neutrophil</tissue>
    </source>
</reference>
<sequence length="62" mass="6928">MRLHHLLLLLLLVVLSSGSGFTQGVRSYLSCWGNRGICLLNRCPGRMRQIGTCLAPRVKCCR</sequence>
<protein>
    <recommendedName>
        <fullName>Beta-defensin 10</fullName>
    </recommendedName>
    <alternativeName>
        <fullName>BNBD-10</fullName>
    </alternativeName>
    <alternativeName>
        <fullName>BNDB-10</fullName>
    </alternativeName>
    <alternativeName>
        <fullName>Neutrophil beta-defensin 10</fullName>
    </alternativeName>
</protein>
<accession>P46168</accession>
<accession>Q5W5G8</accession>
<keyword id="KW-0044">Antibiotic</keyword>
<keyword id="KW-0929">Antimicrobial</keyword>
<keyword id="KW-0211">Defensin</keyword>
<keyword id="KW-0903">Direct protein sequencing</keyword>
<keyword id="KW-1015">Disulfide bond</keyword>
<keyword id="KW-0873">Pyrrolidone carboxylic acid</keyword>
<keyword id="KW-1185">Reference proteome</keyword>
<keyword id="KW-0964">Secreted</keyword>
<keyword id="KW-0732">Signal</keyword>
<comment type="function">
    <text>Has bactericidal activity. Active against E.coli ML35 and S.aureus 502A.</text>
</comment>
<comment type="subcellular location">
    <subcellularLocation>
        <location>Secreted</location>
    </subcellularLocation>
</comment>
<comment type="tissue specificity">
    <text>Neutrophilic granules.</text>
</comment>
<comment type="similarity">
    <text evidence="3">Belongs to the beta-defensin family.</text>
</comment>
<name>DFB10_BOVIN</name>
<proteinExistence type="evidence at protein level"/>
<feature type="signal peptide" evidence="2">
    <location>
        <begin position="1"/>
        <end position="22"/>
    </location>
</feature>
<feature type="peptide" id="PRO_0000044725" description="Beta-defensin 10">
    <location>
        <begin position="23"/>
        <end position="62"/>
    </location>
</feature>
<feature type="modified residue" description="Pyrrolidone carboxylic acid" evidence="2">
    <location>
        <position position="23"/>
    </location>
</feature>
<feature type="disulfide bond" evidence="1">
    <location>
        <begin position="31"/>
        <end position="60"/>
    </location>
</feature>
<feature type="disulfide bond" evidence="1">
    <location>
        <begin position="38"/>
        <end position="53"/>
    </location>
</feature>
<feature type="disulfide bond" evidence="1">
    <location>
        <begin position="43"/>
        <end position="61"/>
    </location>
</feature>
<organism>
    <name type="scientific">Bos taurus</name>
    <name type="common">Bovine</name>
    <dbReference type="NCBI Taxonomy" id="9913"/>
    <lineage>
        <taxon>Eukaryota</taxon>
        <taxon>Metazoa</taxon>
        <taxon>Chordata</taxon>
        <taxon>Craniata</taxon>
        <taxon>Vertebrata</taxon>
        <taxon>Euteleostomi</taxon>
        <taxon>Mammalia</taxon>
        <taxon>Eutheria</taxon>
        <taxon>Laurasiatheria</taxon>
        <taxon>Artiodactyla</taxon>
        <taxon>Ruminantia</taxon>
        <taxon>Pecora</taxon>
        <taxon>Bovidae</taxon>
        <taxon>Bovinae</taxon>
        <taxon>Bos</taxon>
    </lineage>
</organism>
<gene>
    <name type="primary">DEFB10</name>
    <name type="synonym">BNBD10</name>
</gene>
<evidence type="ECO:0000250" key="1"/>
<evidence type="ECO:0000269" key="2">
    <source>
    </source>
</evidence>
<evidence type="ECO:0000305" key="3"/>
<dbReference type="EMBL" id="AJ567990">
    <property type="protein sequence ID" value="CAD99422.1"/>
    <property type="molecule type" value="Genomic_DNA"/>
</dbReference>
<dbReference type="EMBL" id="AJ567991">
    <property type="protein sequence ID" value="CAD99422.1"/>
    <property type="status" value="JOINED"/>
    <property type="molecule type" value="Genomic_DNA"/>
</dbReference>
<dbReference type="PIR" id="A47753">
    <property type="entry name" value="A47753"/>
</dbReference>
<dbReference type="RefSeq" id="NP_001108556.1">
    <property type="nucleotide sequence ID" value="NM_001115084.1"/>
</dbReference>
<dbReference type="SMR" id="P46168"/>
<dbReference type="FunCoup" id="P46168">
    <property type="interactions" value="23"/>
</dbReference>
<dbReference type="STRING" id="9913.ENSBTAP00000054043"/>
<dbReference type="PaxDb" id="9913-ENSBTAP00000046539"/>
<dbReference type="PeptideAtlas" id="P46168"/>
<dbReference type="GeneID" id="100141457"/>
<dbReference type="KEGG" id="bta:100141457"/>
<dbReference type="CTD" id="246085"/>
<dbReference type="InParanoid" id="P46168"/>
<dbReference type="OrthoDB" id="9623680at2759"/>
<dbReference type="Proteomes" id="UP000009136">
    <property type="component" value="Unplaced"/>
</dbReference>
<dbReference type="GO" id="GO:0005615">
    <property type="term" value="C:extracellular space"/>
    <property type="evidence" value="ECO:0000318"/>
    <property type="project" value="GO_Central"/>
</dbReference>
<dbReference type="GO" id="GO:0031731">
    <property type="term" value="F:CCR6 chemokine receptor binding"/>
    <property type="evidence" value="ECO:0000318"/>
    <property type="project" value="GO_Central"/>
</dbReference>
<dbReference type="GO" id="GO:0042056">
    <property type="term" value="F:chemoattractant activity"/>
    <property type="evidence" value="ECO:0000318"/>
    <property type="project" value="GO_Central"/>
</dbReference>
<dbReference type="GO" id="GO:0060326">
    <property type="term" value="P:cell chemotaxis"/>
    <property type="evidence" value="ECO:0000318"/>
    <property type="project" value="GO_Central"/>
</dbReference>
<dbReference type="GO" id="GO:0042742">
    <property type="term" value="P:defense response to bacterium"/>
    <property type="evidence" value="ECO:0000318"/>
    <property type="project" value="GO_Central"/>
</dbReference>
<dbReference type="FunFam" id="3.10.360.10:FF:000001">
    <property type="entry name" value="Beta-defensin 1"/>
    <property type="match status" value="1"/>
</dbReference>
<dbReference type="Gene3D" id="3.10.360.10">
    <property type="entry name" value="Antimicrobial Peptide, Beta-defensin 2, Chain A"/>
    <property type="match status" value="1"/>
</dbReference>
<dbReference type="InterPro" id="IPR006080">
    <property type="entry name" value="Beta/alpha-defensin_C"/>
</dbReference>
<dbReference type="InterPro" id="IPR001855">
    <property type="entry name" value="Defensin_beta-like"/>
</dbReference>
<dbReference type="PANTHER" id="PTHR20515">
    <property type="entry name" value="BETA-DEFENSIN"/>
    <property type="match status" value="1"/>
</dbReference>
<dbReference type="PANTHER" id="PTHR20515:SF2">
    <property type="entry name" value="DEFENSIN BETA 4A"/>
    <property type="match status" value="1"/>
</dbReference>
<dbReference type="Pfam" id="PF00711">
    <property type="entry name" value="Defensin_beta"/>
    <property type="match status" value="1"/>
</dbReference>
<dbReference type="SMART" id="SM00048">
    <property type="entry name" value="DEFSN"/>
    <property type="match status" value="1"/>
</dbReference>
<dbReference type="SUPFAM" id="SSF57392">
    <property type="entry name" value="Defensin-like"/>
    <property type="match status" value="1"/>
</dbReference>